<reference key="1">
    <citation type="journal article" date="2004" name="Nat. Genet.">
        <title>Comparison of genome degradation in Paratyphi A and Typhi, human-restricted serovars of Salmonella enterica that cause typhoid.</title>
        <authorList>
            <person name="McClelland M."/>
            <person name="Sanderson K.E."/>
            <person name="Clifton S.W."/>
            <person name="Latreille P."/>
            <person name="Porwollik S."/>
            <person name="Sabo A."/>
            <person name="Meyer R."/>
            <person name="Bieri T."/>
            <person name="Ozersky P."/>
            <person name="McLellan M."/>
            <person name="Harkins C.R."/>
            <person name="Wang C."/>
            <person name="Nguyen C."/>
            <person name="Berghoff A."/>
            <person name="Elliott G."/>
            <person name="Kohlberg S."/>
            <person name="Strong C."/>
            <person name="Du F."/>
            <person name="Carter J."/>
            <person name="Kremizki C."/>
            <person name="Layman D."/>
            <person name="Leonard S."/>
            <person name="Sun H."/>
            <person name="Fulton L."/>
            <person name="Nash W."/>
            <person name="Miner T."/>
            <person name="Minx P."/>
            <person name="Delehaunty K."/>
            <person name="Fronick C."/>
            <person name="Magrini V."/>
            <person name="Nhan M."/>
            <person name="Warren W."/>
            <person name="Florea L."/>
            <person name="Spieth J."/>
            <person name="Wilson R.K."/>
        </authorList>
    </citation>
    <scope>NUCLEOTIDE SEQUENCE [LARGE SCALE GENOMIC DNA]</scope>
    <source>
        <strain>ATCC 9150 / SARB42</strain>
    </source>
</reference>
<feature type="signal peptide" evidence="1">
    <location>
        <begin position="1"/>
        <end position="19"/>
    </location>
</feature>
<feature type="chain" id="PRO_0000044580" description="Penicillin-insensitive murein endopeptidase">
    <location>
        <begin position="20"/>
        <end position="274"/>
    </location>
</feature>
<feature type="region of interest" description="Disordered" evidence="2">
    <location>
        <begin position="225"/>
        <end position="274"/>
    </location>
</feature>
<feature type="binding site" evidence="1">
    <location>
        <position position="110"/>
    </location>
    <ligand>
        <name>Zn(2+)</name>
        <dbReference type="ChEBI" id="CHEBI:29105"/>
        <label>1</label>
    </ligand>
</feature>
<feature type="binding site" evidence="1">
    <location>
        <position position="113"/>
    </location>
    <ligand>
        <name>Zn(2+)</name>
        <dbReference type="ChEBI" id="CHEBI:29105"/>
        <label>1</label>
    </ligand>
</feature>
<feature type="binding site" evidence="1">
    <location>
        <position position="120"/>
    </location>
    <ligand>
        <name>Zn(2+)</name>
        <dbReference type="ChEBI" id="CHEBI:29105"/>
        <label>1</label>
    </ligand>
</feature>
<feature type="binding site" evidence="1">
    <location>
        <position position="147"/>
    </location>
    <ligand>
        <name>Zn(2+)</name>
        <dbReference type="ChEBI" id="CHEBI:29105"/>
        <label>2</label>
    </ligand>
</feature>
<feature type="binding site" evidence="1">
    <location>
        <position position="150"/>
    </location>
    <ligand>
        <name>Zn(2+)</name>
        <dbReference type="ChEBI" id="CHEBI:29105"/>
        <label>2</label>
    </ligand>
</feature>
<feature type="disulfide bond" evidence="1">
    <location>
        <begin position="44"/>
        <end position="265"/>
    </location>
</feature>
<feature type="disulfide bond" evidence="1">
    <location>
        <begin position="187"/>
        <end position="235"/>
    </location>
</feature>
<feature type="disulfide bond" evidence="1">
    <location>
        <begin position="216"/>
        <end position="223"/>
    </location>
</feature>
<organism>
    <name type="scientific">Salmonella paratyphi A (strain ATCC 9150 / SARB42)</name>
    <dbReference type="NCBI Taxonomy" id="295319"/>
    <lineage>
        <taxon>Bacteria</taxon>
        <taxon>Pseudomonadati</taxon>
        <taxon>Pseudomonadota</taxon>
        <taxon>Gammaproteobacteria</taxon>
        <taxon>Enterobacterales</taxon>
        <taxon>Enterobacteriaceae</taxon>
        <taxon>Salmonella</taxon>
    </lineage>
</organism>
<dbReference type="EC" id="3.4.24.-" evidence="1"/>
<dbReference type="EMBL" id="CP000026">
    <property type="protein sequence ID" value="AAV76483.1"/>
    <property type="molecule type" value="Genomic_DNA"/>
</dbReference>
<dbReference type="RefSeq" id="WP_000750430.1">
    <property type="nucleotide sequence ID" value="NC_006511.1"/>
</dbReference>
<dbReference type="SMR" id="Q5PCX1"/>
<dbReference type="MEROPS" id="M74.001"/>
<dbReference type="KEGG" id="spt:SPA0481"/>
<dbReference type="HOGENOM" id="CLU_052496_0_0_6"/>
<dbReference type="Proteomes" id="UP000008185">
    <property type="component" value="Chromosome"/>
</dbReference>
<dbReference type="GO" id="GO:0030288">
    <property type="term" value="C:outer membrane-bounded periplasmic space"/>
    <property type="evidence" value="ECO:0007669"/>
    <property type="project" value="InterPro"/>
</dbReference>
<dbReference type="GO" id="GO:0046872">
    <property type="term" value="F:metal ion binding"/>
    <property type="evidence" value="ECO:0007669"/>
    <property type="project" value="UniProtKB-KW"/>
</dbReference>
<dbReference type="GO" id="GO:0004222">
    <property type="term" value="F:metalloendopeptidase activity"/>
    <property type="evidence" value="ECO:0007669"/>
    <property type="project" value="UniProtKB-UniRule"/>
</dbReference>
<dbReference type="GO" id="GO:0004252">
    <property type="term" value="F:serine-type endopeptidase activity"/>
    <property type="evidence" value="ECO:0007669"/>
    <property type="project" value="InterPro"/>
</dbReference>
<dbReference type="GO" id="GO:0000270">
    <property type="term" value="P:peptidoglycan metabolic process"/>
    <property type="evidence" value="ECO:0007669"/>
    <property type="project" value="UniProtKB-UniRule"/>
</dbReference>
<dbReference type="GO" id="GO:0006508">
    <property type="term" value="P:proteolysis"/>
    <property type="evidence" value="ECO:0007669"/>
    <property type="project" value="UniProtKB-KW"/>
</dbReference>
<dbReference type="FunFam" id="3.30.1380.10:FF:000002">
    <property type="entry name" value="Penicillin-insensitive murein endopeptidase"/>
    <property type="match status" value="1"/>
</dbReference>
<dbReference type="Gene3D" id="3.30.1380.10">
    <property type="match status" value="1"/>
</dbReference>
<dbReference type="HAMAP" id="MF_01623">
    <property type="entry name" value="MepA"/>
    <property type="match status" value="1"/>
</dbReference>
<dbReference type="InterPro" id="IPR009045">
    <property type="entry name" value="Hedgehog_sig/DD-Pept_Zn-bd_sf"/>
</dbReference>
<dbReference type="InterPro" id="IPR005073">
    <property type="entry name" value="Peptidase_M74"/>
</dbReference>
<dbReference type="NCBIfam" id="NF006947">
    <property type="entry name" value="PRK09429.1"/>
    <property type="match status" value="1"/>
</dbReference>
<dbReference type="Pfam" id="PF03411">
    <property type="entry name" value="Peptidase_M74"/>
    <property type="match status" value="1"/>
</dbReference>
<dbReference type="PIRSF" id="PIRSF018455">
    <property type="entry name" value="MepA"/>
    <property type="match status" value="1"/>
</dbReference>
<dbReference type="SUPFAM" id="SSF55166">
    <property type="entry name" value="Hedgehog/DD-peptidase"/>
    <property type="match status" value="1"/>
</dbReference>
<sequence length="274" mass="30254">MKKTAIALLAWFVSSASLAATPWQKITHPVPGAAQSIGSFANGCIIGADTLPVQSDNYQVMRTDQRRYFGHPDLVMFIQRLSHQAQQRGLGTVLIGDMGMPAGGRFNGGHASHQTGLDVDIFLQLPKTRWSQAQLLRPQALDLVSRDGKHVVPSRWSSDIASLIKLAAQDNDVTRIFVNPAIKQQLCLDAGSDRDWLRKVRPWFQHRAHMRVRLRCPADSLECEDQPLPPPGDGCGAELQSWFEPPKPGTTKPEKKTPPPLPPSCQALLDEHVL</sequence>
<name>MEPA_SALPA</name>
<accession>Q5PCX1</accession>
<keyword id="KW-1015">Disulfide bond</keyword>
<keyword id="KW-0378">Hydrolase</keyword>
<keyword id="KW-0479">Metal-binding</keyword>
<keyword id="KW-0482">Metalloprotease</keyword>
<keyword id="KW-0574">Periplasm</keyword>
<keyword id="KW-0645">Protease</keyword>
<keyword id="KW-0732">Signal</keyword>
<keyword id="KW-0862">Zinc</keyword>
<protein>
    <recommendedName>
        <fullName evidence="1">Penicillin-insensitive murein endopeptidase</fullName>
        <ecNumber evidence="1">3.4.24.-</ecNumber>
    </recommendedName>
    <alternativeName>
        <fullName evidence="1">D-alanyl-D-alanine-endopeptidase</fullName>
        <shortName evidence="1">DD-endopeptidase</shortName>
    </alternativeName>
</protein>
<comment type="function">
    <text evidence="1">Murein endopeptidase that cleaves the D-alanyl-meso-2,6-diamino-pimelyl amide bond that connects peptidoglycan strands. Likely plays a role in the removal of murein from the sacculus.</text>
</comment>
<comment type="cofactor">
    <cofactor evidence="1">
        <name>Zn(2+)</name>
        <dbReference type="ChEBI" id="CHEBI:29105"/>
    </cofactor>
    <text evidence="1">Binds 2 Zn(2+) ions per subunit. Zn(2+) ion 1 is bound in the active site. Zn(2+) ion 2 is bound at the dimer interface by residues from both subunits.</text>
</comment>
<comment type="subunit">
    <text evidence="1">Dimer.</text>
</comment>
<comment type="subcellular location">
    <subcellularLocation>
        <location evidence="1">Periplasm</location>
    </subcellularLocation>
</comment>
<comment type="similarity">
    <text evidence="1">Belongs to the peptidase M74 family.</text>
</comment>
<evidence type="ECO:0000255" key="1">
    <source>
        <dbReference type="HAMAP-Rule" id="MF_01623"/>
    </source>
</evidence>
<evidence type="ECO:0000256" key="2">
    <source>
        <dbReference type="SAM" id="MobiDB-lite"/>
    </source>
</evidence>
<gene>
    <name evidence="1" type="primary">mepA</name>
    <name type="ordered locus">SPA0481</name>
</gene>
<proteinExistence type="inferred from homology"/>